<organism>
    <name type="scientific">Staphylococcus aureus (strain USA300 / TCH1516)</name>
    <dbReference type="NCBI Taxonomy" id="451516"/>
    <lineage>
        <taxon>Bacteria</taxon>
        <taxon>Bacillati</taxon>
        <taxon>Bacillota</taxon>
        <taxon>Bacilli</taxon>
        <taxon>Bacillales</taxon>
        <taxon>Staphylococcaceae</taxon>
        <taxon>Staphylococcus</taxon>
    </lineage>
</organism>
<keyword id="KW-0227">DNA damage</keyword>
<keyword id="KW-0233">DNA recombination</keyword>
<keyword id="KW-0234">DNA repair</keyword>
<keyword id="KW-0479">Metal-binding</keyword>
<keyword id="KW-0862">Zinc</keyword>
<keyword id="KW-0863">Zinc-finger</keyword>
<dbReference type="EMBL" id="CP000730">
    <property type="protein sequence ID" value="ABX28505.1"/>
    <property type="molecule type" value="Genomic_DNA"/>
</dbReference>
<dbReference type="RefSeq" id="WP_000559156.1">
    <property type="nucleotide sequence ID" value="NC_010079.1"/>
</dbReference>
<dbReference type="SMR" id="A8Z0X4"/>
<dbReference type="KEGG" id="sax:USA300HOU_0479"/>
<dbReference type="HOGENOM" id="CLU_060739_1_0_9"/>
<dbReference type="GO" id="GO:0003677">
    <property type="term" value="F:DNA binding"/>
    <property type="evidence" value="ECO:0007669"/>
    <property type="project" value="UniProtKB-UniRule"/>
</dbReference>
<dbReference type="GO" id="GO:0008270">
    <property type="term" value="F:zinc ion binding"/>
    <property type="evidence" value="ECO:0007669"/>
    <property type="project" value="UniProtKB-KW"/>
</dbReference>
<dbReference type="GO" id="GO:0006310">
    <property type="term" value="P:DNA recombination"/>
    <property type="evidence" value="ECO:0007669"/>
    <property type="project" value="UniProtKB-UniRule"/>
</dbReference>
<dbReference type="GO" id="GO:0006281">
    <property type="term" value="P:DNA repair"/>
    <property type="evidence" value="ECO:0007669"/>
    <property type="project" value="UniProtKB-UniRule"/>
</dbReference>
<dbReference type="CDD" id="cd01025">
    <property type="entry name" value="TOPRIM_recR"/>
    <property type="match status" value="1"/>
</dbReference>
<dbReference type="Gene3D" id="3.30.60.80">
    <property type="match status" value="1"/>
</dbReference>
<dbReference type="Gene3D" id="3.40.1360.10">
    <property type="match status" value="1"/>
</dbReference>
<dbReference type="Gene3D" id="6.10.250.240">
    <property type="match status" value="1"/>
</dbReference>
<dbReference type="Gene3D" id="1.10.8.420">
    <property type="entry name" value="RecR Domain 1"/>
    <property type="match status" value="1"/>
</dbReference>
<dbReference type="HAMAP" id="MF_00017">
    <property type="entry name" value="RecR"/>
    <property type="match status" value="1"/>
</dbReference>
<dbReference type="InterPro" id="IPR000093">
    <property type="entry name" value="DNA_Rcmb_RecR"/>
</dbReference>
<dbReference type="InterPro" id="IPR003583">
    <property type="entry name" value="Hlx-hairpin-Hlx_DNA-bd_motif"/>
</dbReference>
<dbReference type="InterPro" id="IPR023627">
    <property type="entry name" value="Rcmb_RecR"/>
</dbReference>
<dbReference type="InterPro" id="IPR015967">
    <property type="entry name" value="Rcmb_RecR_Znf"/>
</dbReference>
<dbReference type="InterPro" id="IPR006171">
    <property type="entry name" value="TOPRIM_dom"/>
</dbReference>
<dbReference type="InterPro" id="IPR034137">
    <property type="entry name" value="TOPRIM_RecR"/>
</dbReference>
<dbReference type="NCBIfam" id="TIGR00615">
    <property type="entry name" value="recR"/>
    <property type="match status" value="1"/>
</dbReference>
<dbReference type="PANTHER" id="PTHR30446">
    <property type="entry name" value="RECOMBINATION PROTEIN RECR"/>
    <property type="match status" value="1"/>
</dbReference>
<dbReference type="PANTHER" id="PTHR30446:SF0">
    <property type="entry name" value="RECOMBINATION PROTEIN RECR"/>
    <property type="match status" value="1"/>
</dbReference>
<dbReference type="Pfam" id="PF21175">
    <property type="entry name" value="RecR_C"/>
    <property type="match status" value="1"/>
</dbReference>
<dbReference type="Pfam" id="PF21176">
    <property type="entry name" value="RecR_HhH"/>
    <property type="match status" value="1"/>
</dbReference>
<dbReference type="Pfam" id="PF02132">
    <property type="entry name" value="RecR_ZnF"/>
    <property type="match status" value="1"/>
</dbReference>
<dbReference type="Pfam" id="PF13662">
    <property type="entry name" value="Toprim_4"/>
    <property type="match status" value="1"/>
</dbReference>
<dbReference type="SMART" id="SM00278">
    <property type="entry name" value="HhH1"/>
    <property type="match status" value="1"/>
</dbReference>
<dbReference type="SMART" id="SM00493">
    <property type="entry name" value="TOPRIM"/>
    <property type="match status" value="1"/>
</dbReference>
<dbReference type="SUPFAM" id="SSF111304">
    <property type="entry name" value="Recombination protein RecR"/>
    <property type="match status" value="1"/>
</dbReference>
<dbReference type="PROSITE" id="PS01300">
    <property type="entry name" value="RECR"/>
    <property type="match status" value="1"/>
</dbReference>
<dbReference type="PROSITE" id="PS50880">
    <property type="entry name" value="TOPRIM"/>
    <property type="match status" value="1"/>
</dbReference>
<feature type="chain" id="PRO_1000074137" description="Recombination protein RecR">
    <location>
        <begin position="1"/>
        <end position="198"/>
    </location>
</feature>
<feature type="domain" description="Toprim" evidence="1">
    <location>
        <begin position="80"/>
        <end position="175"/>
    </location>
</feature>
<feature type="zinc finger region" description="C4-type" evidence="1">
    <location>
        <begin position="57"/>
        <end position="72"/>
    </location>
</feature>
<evidence type="ECO:0000255" key="1">
    <source>
        <dbReference type="HAMAP-Rule" id="MF_00017"/>
    </source>
</evidence>
<comment type="function">
    <text evidence="1">May play a role in DNA repair. It seems to be involved in an RecBC-independent recombinational process of DNA repair. It may act with RecF and RecO.</text>
</comment>
<comment type="similarity">
    <text evidence="1">Belongs to the RecR family.</text>
</comment>
<sequence length="198" mass="22100">MHYPEPISKLIDSFMKLPGIGPKTAQRLAFHTLDMKEDDVVQFAKALVDVKRELTYCSVCGHITENDPCYICEDKQRDRSVICVVEDDKDVIAMEKMREYKGLYHVLHGSISPMDGIGPEDINIPSLIERLKNDEVSELILAMNPNLEGESTAMYISRLVKPIGIKVTRLAQGLSVGGDLEYADEVTLSKAIAGRTEM</sequence>
<protein>
    <recommendedName>
        <fullName evidence="1">Recombination protein RecR</fullName>
    </recommendedName>
</protein>
<name>RECR_STAAT</name>
<proteinExistence type="inferred from homology"/>
<gene>
    <name evidence="1" type="primary">recR</name>
    <name type="ordered locus">USA300HOU_0479</name>
</gene>
<reference key="1">
    <citation type="journal article" date="2007" name="BMC Microbiol.">
        <title>Subtle genetic changes enhance virulence of methicillin resistant and sensitive Staphylococcus aureus.</title>
        <authorList>
            <person name="Highlander S.K."/>
            <person name="Hulten K.G."/>
            <person name="Qin X."/>
            <person name="Jiang H."/>
            <person name="Yerrapragada S."/>
            <person name="Mason E.O. Jr."/>
            <person name="Shang Y."/>
            <person name="Williams T.M."/>
            <person name="Fortunov R.M."/>
            <person name="Liu Y."/>
            <person name="Igboeli O."/>
            <person name="Petrosino J."/>
            <person name="Tirumalai M."/>
            <person name="Uzman A."/>
            <person name="Fox G.E."/>
            <person name="Cardenas A.M."/>
            <person name="Muzny D.M."/>
            <person name="Hemphill L."/>
            <person name="Ding Y."/>
            <person name="Dugan S."/>
            <person name="Blyth P.R."/>
            <person name="Buhay C.J."/>
            <person name="Dinh H.H."/>
            <person name="Hawes A.C."/>
            <person name="Holder M."/>
            <person name="Kovar C.L."/>
            <person name="Lee S.L."/>
            <person name="Liu W."/>
            <person name="Nazareth L.V."/>
            <person name="Wang Q."/>
            <person name="Zhou J."/>
            <person name="Kaplan S.L."/>
            <person name="Weinstock G.M."/>
        </authorList>
    </citation>
    <scope>NUCLEOTIDE SEQUENCE [LARGE SCALE GENOMIC DNA]</scope>
    <source>
        <strain>USA300 / TCH1516</strain>
    </source>
</reference>
<accession>A8Z0X4</accession>